<feature type="peptide" id="PRO_0000044019" description="Chloramphenicol resistance leader peptide">
    <location>
        <begin position="1"/>
        <end position="9"/>
    </location>
</feature>
<organism>
    <name type="scientific">Streptococcus agalactiae</name>
    <dbReference type="NCBI Taxonomy" id="1311"/>
    <lineage>
        <taxon>Bacteria</taxon>
        <taxon>Bacillati</taxon>
        <taxon>Bacillota</taxon>
        <taxon>Bacilli</taxon>
        <taxon>Lactobacillales</taxon>
        <taxon>Streptococcaceae</taxon>
        <taxon>Streptococcus</taxon>
    </lineage>
</organism>
<name>LPCA_STRAG</name>
<geneLocation type="plasmid">
    <name>pIP501</name>
</geneLocation>
<proteinExistence type="predicted"/>
<protein>
    <recommendedName>
        <fullName>Chloramphenicol resistance leader peptide</fullName>
    </recommendedName>
</protein>
<accession>P0A062</accession>
<accession>P36884</accession>
<keyword id="KW-0046">Antibiotic resistance</keyword>
<keyword id="KW-0428">Leader peptide</keyword>
<keyword id="KW-0614">Plasmid</keyword>
<reference key="1">
    <citation type="journal article" date="1992" name="Plasmid">
        <title>Nucleotide sequence of the chloramphenicol resistance determinant of the streptococcal plasmid pIP501.</title>
        <authorList>
            <person name="Trieu-Cuot P."/>
            <person name="de Cespedes G."/>
            <person name="Horaud T."/>
        </authorList>
    </citation>
    <scope>NUCLEOTIDE SEQUENCE [GENOMIC DNA]</scope>
</reference>
<dbReference type="EMBL" id="X65462">
    <property type="protein sequence ID" value="CAA46454.1"/>
    <property type="molecule type" value="Genomic_DNA"/>
</dbReference>
<dbReference type="PIR" id="S30494">
    <property type="entry name" value="S30494"/>
</dbReference>
<dbReference type="GO" id="GO:0046677">
    <property type="term" value="P:response to antibiotic"/>
    <property type="evidence" value="ECO:0007669"/>
    <property type="project" value="UniProtKB-KW"/>
</dbReference>
<sequence>MKKSEDYSS</sequence>